<name>F229A_MOUSE</name>
<gene>
    <name type="primary">Fam229a</name>
</gene>
<sequence length="128" mass="13171">MQSSPSTLGPGRAADTCQAPPGPERPPVARARAVASSLGPASASGRVPRGLDMSAQETPQGRRFPIEAGDSPGLASAPESQDSPEPVATDQNPVRPLRRCPGCHCLTLLHVPIDVYLAMGGSPRARAT</sequence>
<organism>
    <name type="scientific">Mus musculus</name>
    <name type="common">Mouse</name>
    <dbReference type="NCBI Taxonomy" id="10090"/>
    <lineage>
        <taxon>Eukaryota</taxon>
        <taxon>Metazoa</taxon>
        <taxon>Chordata</taxon>
        <taxon>Craniata</taxon>
        <taxon>Vertebrata</taxon>
        <taxon>Euteleostomi</taxon>
        <taxon>Mammalia</taxon>
        <taxon>Eutheria</taxon>
        <taxon>Euarchontoglires</taxon>
        <taxon>Glires</taxon>
        <taxon>Rodentia</taxon>
        <taxon>Myomorpha</taxon>
        <taxon>Muroidea</taxon>
        <taxon>Muridae</taxon>
        <taxon>Murinae</taxon>
        <taxon>Mus</taxon>
        <taxon>Mus</taxon>
    </lineage>
</organism>
<comment type="similarity">
    <text evidence="2">Belongs to the FAM229 family.</text>
</comment>
<accession>B2KGE5</accession>
<feature type="chain" id="PRO_0000421724" description="Protein FAM229A">
    <location>
        <begin position="1"/>
        <end position="128"/>
    </location>
</feature>
<feature type="region of interest" description="Disordered" evidence="1">
    <location>
        <begin position="1"/>
        <end position="96"/>
    </location>
</feature>
<reference key="1">
    <citation type="journal article" date="2009" name="PLoS Biol.">
        <title>Lineage-specific biology revealed by a finished genome assembly of the mouse.</title>
        <authorList>
            <person name="Church D.M."/>
            <person name="Goodstadt L."/>
            <person name="Hillier L.W."/>
            <person name="Zody M.C."/>
            <person name="Goldstein S."/>
            <person name="She X."/>
            <person name="Bult C.J."/>
            <person name="Agarwala R."/>
            <person name="Cherry J.L."/>
            <person name="DiCuccio M."/>
            <person name="Hlavina W."/>
            <person name="Kapustin Y."/>
            <person name="Meric P."/>
            <person name="Maglott D."/>
            <person name="Birtle Z."/>
            <person name="Marques A.C."/>
            <person name="Graves T."/>
            <person name="Zhou S."/>
            <person name="Teague B."/>
            <person name="Potamousis K."/>
            <person name="Churas C."/>
            <person name="Place M."/>
            <person name="Herschleb J."/>
            <person name="Runnheim R."/>
            <person name="Forrest D."/>
            <person name="Amos-Landgraf J."/>
            <person name="Schwartz D.C."/>
            <person name="Cheng Z."/>
            <person name="Lindblad-Toh K."/>
            <person name="Eichler E.E."/>
            <person name="Ponting C.P."/>
        </authorList>
    </citation>
    <scope>NUCLEOTIDE SEQUENCE [LARGE SCALE GENOMIC DNA]</scope>
    <source>
        <strain>C57BL/6J</strain>
    </source>
</reference>
<reference key="2">
    <citation type="submission" date="2009-01" db="EMBL/GenBank/DDBJ databases">
        <authorList>
            <person name="Lovell J."/>
        </authorList>
    </citation>
    <scope>NUCLEOTIDE SEQUENCE [LARGE SCALE GENOMIC DNA]</scope>
</reference>
<reference key="3">
    <citation type="submission" date="2005-09" db="EMBL/GenBank/DDBJ databases">
        <authorList>
            <person name="Mural R.J."/>
            <person name="Adams M.D."/>
            <person name="Myers E.W."/>
            <person name="Smith H.O."/>
            <person name="Venter J.C."/>
        </authorList>
    </citation>
    <scope>NUCLEOTIDE SEQUENCE [LARGE SCALE GENOMIC DNA]</scope>
</reference>
<proteinExistence type="inferred from homology"/>
<dbReference type="EMBL" id="AL606921">
    <property type="status" value="NOT_ANNOTATED_CDS"/>
    <property type="molecule type" value="Genomic_DNA"/>
</dbReference>
<dbReference type="EMBL" id="CU302431">
    <property type="status" value="NOT_ANNOTATED_CDS"/>
    <property type="molecule type" value="Genomic_DNA"/>
</dbReference>
<dbReference type="EMBL" id="CH466552">
    <property type="protein sequence ID" value="EDL30191.1"/>
    <property type="molecule type" value="Genomic_DNA"/>
</dbReference>
<dbReference type="CCDS" id="CCDS38885.1"/>
<dbReference type="RefSeq" id="NP_001078960.1">
    <property type="nucleotide sequence ID" value="NM_001085491.2"/>
</dbReference>
<dbReference type="STRING" id="10090.ENSMUSP00000101658"/>
<dbReference type="iPTMnet" id="B2KGE5"/>
<dbReference type="PhosphoSitePlus" id="B2KGE5"/>
<dbReference type="PaxDb" id="10090-ENSMUSP00000101658"/>
<dbReference type="ProteomicsDB" id="275733"/>
<dbReference type="Antibodypedia" id="74176">
    <property type="antibodies" value="1 antibodies from 1 providers"/>
</dbReference>
<dbReference type="Ensembl" id="ENSMUST00000106043.3">
    <property type="protein sequence ID" value="ENSMUSP00000101658.3"/>
    <property type="gene ID" value="ENSMUSG00000078554.3"/>
</dbReference>
<dbReference type="GeneID" id="68233"/>
<dbReference type="KEGG" id="mmu:68233"/>
<dbReference type="UCSC" id="uc008uxd.1">
    <property type="organism name" value="mouse"/>
</dbReference>
<dbReference type="AGR" id="MGI:1915483"/>
<dbReference type="CTD" id="100128071"/>
<dbReference type="MGI" id="MGI:1915483">
    <property type="gene designation" value="Fam229a"/>
</dbReference>
<dbReference type="VEuPathDB" id="HostDB:ENSMUSG00000078554"/>
<dbReference type="eggNOG" id="ENOG502SVAR">
    <property type="taxonomic scope" value="Eukaryota"/>
</dbReference>
<dbReference type="GeneTree" id="ENSGT00390000017996"/>
<dbReference type="HOGENOM" id="CLU_1969768_0_0_1"/>
<dbReference type="InParanoid" id="B2KGE5"/>
<dbReference type="OMA" id="HATETCP"/>
<dbReference type="OrthoDB" id="9885352at2759"/>
<dbReference type="PhylomeDB" id="B2KGE5"/>
<dbReference type="TreeFam" id="TF339579"/>
<dbReference type="BioGRID-ORCS" id="68233">
    <property type="hits" value="3 hits in 77 CRISPR screens"/>
</dbReference>
<dbReference type="ChiTaRS" id="Fam229a">
    <property type="organism name" value="mouse"/>
</dbReference>
<dbReference type="PRO" id="PR:B2KGE5"/>
<dbReference type="Proteomes" id="UP000000589">
    <property type="component" value="Chromosome 4"/>
</dbReference>
<dbReference type="RNAct" id="B2KGE5">
    <property type="molecule type" value="protein"/>
</dbReference>
<dbReference type="Bgee" id="ENSMUSG00000078554">
    <property type="expression patterns" value="Expressed in seminiferous tubule of testis and 26 other cell types or tissues"/>
</dbReference>
<dbReference type="InterPro" id="IPR028025">
    <property type="entry name" value="FAM229"/>
</dbReference>
<dbReference type="PANTHER" id="PTHR35355">
    <property type="entry name" value="PROTEIN FAM229A"/>
    <property type="match status" value="1"/>
</dbReference>
<dbReference type="PANTHER" id="PTHR35355:SF1">
    <property type="entry name" value="PROTEIN FAM229A"/>
    <property type="match status" value="1"/>
</dbReference>
<dbReference type="Pfam" id="PF14982">
    <property type="entry name" value="UPF0731"/>
    <property type="match status" value="1"/>
</dbReference>
<keyword id="KW-1185">Reference proteome</keyword>
<protein>
    <recommendedName>
        <fullName>Protein FAM229A</fullName>
    </recommendedName>
</protein>
<evidence type="ECO:0000256" key="1">
    <source>
        <dbReference type="SAM" id="MobiDB-lite"/>
    </source>
</evidence>
<evidence type="ECO:0000305" key="2"/>